<protein>
    <recommendedName>
        <fullName>S-acyl fatty acid synthase thioesterase, medium chain</fullName>
        <ecNumber>3.1.2.14</ecNumber>
    </recommendedName>
    <alternativeName>
        <fullName>Thioesterase II</fullName>
    </alternativeName>
</protein>
<organism>
    <name type="scientific">Anas platyrhynchos</name>
    <name type="common">Mallard</name>
    <name type="synonym">Anas boschas</name>
    <dbReference type="NCBI Taxonomy" id="8839"/>
    <lineage>
        <taxon>Eukaryota</taxon>
        <taxon>Metazoa</taxon>
        <taxon>Chordata</taxon>
        <taxon>Craniata</taxon>
        <taxon>Vertebrata</taxon>
        <taxon>Euteleostomi</taxon>
        <taxon>Archelosauria</taxon>
        <taxon>Archosauria</taxon>
        <taxon>Dinosauria</taxon>
        <taxon>Saurischia</taxon>
        <taxon>Theropoda</taxon>
        <taxon>Coelurosauria</taxon>
        <taxon>Aves</taxon>
        <taxon>Neognathae</taxon>
        <taxon>Galloanserae</taxon>
        <taxon>Anseriformes</taxon>
        <taxon>Anatidae</taxon>
        <taxon>Anatinae</taxon>
        <taxon>Anas</taxon>
    </lineage>
</organism>
<keyword id="KW-0275">Fatty acid biosynthesis</keyword>
<keyword id="KW-0276">Fatty acid metabolism</keyword>
<keyword id="KW-0378">Hydrolase</keyword>
<keyword id="KW-0444">Lipid biosynthesis</keyword>
<keyword id="KW-0443">Lipid metabolism</keyword>
<evidence type="ECO:0000250" key="1"/>
<evidence type="ECO:0000305" key="2"/>
<proteinExistence type="evidence at transcript level"/>
<feature type="chain" id="PRO_0000180357" description="S-acyl fatty acid synthase thioesterase, medium chain">
    <location>
        <begin position="1"/>
        <end position="251"/>
    </location>
</feature>
<feature type="active site" evidence="2">
    <location>
        <position position="90"/>
    </location>
</feature>
<feature type="active site" evidence="1">
    <location>
        <position position="226"/>
    </location>
</feature>
<feature type="sequence conflict" description="In Ref. 2; AAA49219." evidence="2" ref="2">
    <original>V</original>
    <variation>E</variation>
    <location>
        <position position="43"/>
    </location>
</feature>
<sequence>MDKVIARPYKRPNALCRLICFPWAGGNCSFFIRWCEAFSSIIVVSVIRLAGRECRDTEPFPEDMAEVVNEITNALLKDLQEKPFALFGHSFGSFVSYALAVHLKEKHGLEPVHMFFSGSYGPHSEYFHLMYKLPEVEDSRLLELIHTLGGTPPEFLQNEQITKHLLRVLKEDQKVLVTYPWHDVRKKYFSCDLTCFNGSDEKNHGSEAWIAITSGDTSIYSLPGNHFYLMEPSNETFLIKYITKCIENSDI</sequence>
<reference key="1">
    <citation type="journal article" date="1985" name="J. Biol. Chem.">
        <title>Cloning and sequencing of the cDNA for S-acyl fatty acid synthase thioesterase from the uropygial gland of mallard duck.</title>
        <authorList>
            <person name="Poulose A.J."/>
            <person name="Rogers L."/>
            <person name="Cheesbrough T.M."/>
            <person name="Kolattukudy P.E."/>
        </authorList>
    </citation>
    <scope>NUCLEOTIDE SEQUENCE [MRNA]</scope>
    <source>
        <tissue>Uropygial gland</tissue>
    </source>
</reference>
<reference key="2">
    <citation type="journal article" date="1988" name="DNA">
        <title>Nucleotide sequence of the S-acyl fatty acid synthase thioesterase gene and its tissue-specific expression.</title>
        <authorList>
            <person name="Sasaki G.C."/>
            <person name="Cheesbrough V."/>
            <person name="Kolattukudy P.E."/>
        </authorList>
    </citation>
    <scope>NUCLEOTIDE SEQUENCE [GENOMIC DNA]</scope>
    <source>
        <tissue>Uropygial gland</tissue>
    </source>
</reference>
<accession>P00633</accession>
<name>SAST_ANAPL</name>
<dbReference type="EC" id="3.1.2.14"/>
<dbReference type="EMBL" id="M12101">
    <property type="protein sequence ID" value="AAA49222.1"/>
    <property type="molecule type" value="mRNA"/>
</dbReference>
<dbReference type="EMBL" id="M21635">
    <property type="protein sequence ID" value="AAA49219.1"/>
    <property type="molecule type" value="Genomic_DNA"/>
</dbReference>
<dbReference type="PIR" id="A00775">
    <property type="entry name" value="ESDKTM"/>
</dbReference>
<dbReference type="PIR" id="I50520">
    <property type="entry name" value="I50520"/>
</dbReference>
<dbReference type="RefSeq" id="XP_005017942.1">
    <property type="nucleotide sequence ID" value="XM_005017885.2"/>
</dbReference>
<dbReference type="RefSeq" id="XP_012953361.1">
    <property type="nucleotide sequence ID" value="XM_013097907.1"/>
</dbReference>
<dbReference type="SMR" id="P00633"/>
<dbReference type="ESTHER" id="anapl-sast">
    <property type="family name" value="Thioesterase"/>
</dbReference>
<dbReference type="GeneID" id="101793583"/>
<dbReference type="KEGG" id="apla:101793583"/>
<dbReference type="CTD" id="55301"/>
<dbReference type="OrthoDB" id="541883at2759"/>
<dbReference type="Proteomes" id="UP000694400">
    <property type="component" value="Unplaced"/>
</dbReference>
<dbReference type="GO" id="GO:0016297">
    <property type="term" value="F:fatty acyl-[ACP] hydrolase activity"/>
    <property type="evidence" value="ECO:0007669"/>
    <property type="project" value="UniProtKB-EC"/>
</dbReference>
<dbReference type="GO" id="GO:0006633">
    <property type="term" value="P:fatty acid biosynthetic process"/>
    <property type="evidence" value="ECO:0007669"/>
    <property type="project" value="UniProtKB-KW"/>
</dbReference>
<dbReference type="FunFam" id="3.40.50.1820:FF:000153">
    <property type="entry name" value="Surfactin synthase thioesterase subunit"/>
    <property type="match status" value="1"/>
</dbReference>
<dbReference type="Gene3D" id="3.40.50.1820">
    <property type="entry name" value="alpha/beta hydrolase"/>
    <property type="match status" value="1"/>
</dbReference>
<dbReference type="InterPro" id="IPR029058">
    <property type="entry name" value="AB_hydrolase_fold"/>
</dbReference>
<dbReference type="InterPro" id="IPR012223">
    <property type="entry name" value="TEII"/>
</dbReference>
<dbReference type="InterPro" id="IPR001031">
    <property type="entry name" value="Thioesterase"/>
</dbReference>
<dbReference type="PANTHER" id="PTHR11487:SF0">
    <property type="entry name" value="S-ACYL FATTY ACID SYNTHASE THIOESTERASE, MEDIUM CHAIN"/>
    <property type="match status" value="1"/>
</dbReference>
<dbReference type="PANTHER" id="PTHR11487">
    <property type="entry name" value="THIOESTERASE"/>
    <property type="match status" value="1"/>
</dbReference>
<dbReference type="Pfam" id="PF00975">
    <property type="entry name" value="Thioesterase"/>
    <property type="match status" value="1"/>
</dbReference>
<dbReference type="SUPFAM" id="SSF53474">
    <property type="entry name" value="alpha/beta-Hydrolases"/>
    <property type="match status" value="1"/>
</dbReference>
<comment type="function">
    <text>In fatty acid biosynthesis chain termination and release of the free fatty acid product is achieved by hydrolysis of the thio ester by a thioesterase I, a component of the fatty acid synthetase complex. The chain length of the released fatty acid is usually C16. However, in the mammary glands of non-ruminant mammals, and in the uropygial gland of certain waterfowl there exists a second thioesterase which releases medium-chain length fatty acids (C8 to C2).</text>
</comment>
<comment type="catalytic activity">
    <reaction>
        <text>(9Z)-octadecenoyl-[ACP] + H2O = (9Z)-octadecenoate + holo-[ACP] + H(+)</text>
        <dbReference type="Rhea" id="RHEA:15057"/>
        <dbReference type="Rhea" id="RHEA-COMP:9685"/>
        <dbReference type="Rhea" id="RHEA-COMP:9924"/>
        <dbReference type="ChEBI" id="CHEBI:15377"/>
        <dbReference type="ChEBI" id="CHEBI:15378"/>
        <dbReference type="ChEBI" id="CHEBI:30823"/>
        <dbReference type="ChEBI" id="CHEBI:64479"/>
        <dbReference type="ChEBI" id="CHEBI:78783"/>
        <dbReference type="EC" id="3.1.2.14"/>
    </reaction>
</comment>
<comment type="similarity">
    <text evidence="2">Belongs to the thioesterase family.</text>
</comment>